<comment type="function">
    <text evidence="1">Catalyzes the tRNA-independent activation of glutamate in presence of ATP and the subsequent transfer of glutamate onto a tRNA(Asp). Glutamate is transferred on the 2-amino-5-(4,5-dihydroxy-2-cyclopenten-1-yl) moiety of the queuosine in the wobble position of the QUC anticodon.</text>
</comment>
<comment type="cofactor">
    <cofactor evidence="1">
        <name>Zn(2+)</name>
        <dbReference type="ChEBI" id="CHEBI:29105"/>
    </cofactor>
    <text evidence="1">Binds 1 zinc ion per subunit.</text>
</comment>
<comment type="similarity">
    <text evidence="1">Belongs to the class-I aminoacyl-tRNA synthetase family. GluQ subfamily.</text>
</comment>
<feature type="chain" id="PRO_0000208293" description="Glutamyl-Q tRNA(Asp) synthetase">
    <location>
        <begin position="1"/>
        <end position="315"/>
    </location>
</feature>
<feature type="short sequence motif" description="'HIGH' region">
    <location>
        <begin position="24"/>
        <end position="34"/>
    </location>
</feature>
<feature type="short sequence motif" description="'KMSKS' region">
    <location>
        <begin position="251"/>
        <end position="255"/>
    </location>
</feature>
<feature type="binding site" evidence="1">
    <location>
        <begin position="21"/>
        <end position="25"/>
    </location>
    <ligand>
        <name>L-glutamate</name>
        <dbReference type="ChEBI" id="CHEBI:29985"/>
    </ligand>
</feature>
<feature type="binding site" evidence="1">
    <location>
        <position position="63"/>
    </location>
    <ligand>
        <name>L-glutamate</name>
        <dbReference type="ChEBI" id="CHEBI:29985"/>
    </ligand>
</feature>
<feature type="binding site" evidence="1">
    <location>
        <position position="119"/>
    </location>
    <ligand>
        <name>Zn(2+)</name>
        <dbReference type="ChEBI" id="CHEBI:29105"/>
    </ligand>
</feature>
<feature type="binding site" evidence="1">
    <location>
        <position position="121"/>
    </location>
    <ligand>
        <name>Zn(2+)</name>
        <dbReference type="ChEBI" id="CHEBI:29105"/>
    </ligand>
</feature>
<feature type="binding site" evidence="1">
    <location>
        <position position="133"/>
    </location>
    <ligand>
        <name>Zn(2+)</name>
        <dbReference type="ChEBI" id="CHEBI:29105"/>
    </ligand>
</feature>
<feature type="binding site" evidence="1">
    <location>
        <position position="137"/>
    </location>
    <ligand>
        <name>Zn(2+)</name>
        <dbReference type="ChEBI" id="CHEBI:29105"/>
    </ligand>
</feature>
<feature type="binding site" evidence="1">
    <location>
        <position position="190"/>
    </location>
    <ligand>
        <name>L-glutamate</name>
        <dbReference type="ChEBI" id="CHEBI:29985"/>
    </ligand>
</feature>
<feature type="binding site" evidence="1">
    <location>
        <position position="208"/>
    </location>
    <ligand>
        <name>L-glutamate</name>
        <dbReference type="ChEBI" id="CHEBI:29985"/>
    </ligand>
</feature>
<feature type="binding site" evidence="1">
    <location>
        <position position="254"/>
    </location>
    <ligand>
        <name>ATP</name>
        <dbReference type="ChEBI" id="CHEBI:30616"/>
    </ligand>
</feature>
<protein>
    <recommendedName>
        <fullName evidence="1">Glutamyl-Q tRNA(Asp) synthetase</fullName>
        <shortName evidence="1">Glu-Q-RSs</shortName>
        <ecNumber evidence="1">6.1.1.-</ecNumber>
    </recommendedName>
</protein>
<gene>
    <name evidence="1" type="primary">gluQ</name>
    <name type="ordered locus">CPS_4307</name>
</gene>
<name>GLUQ_COLP3</name>
<accession>Q47W65</accession>
<dbReference type="EC" id="6.1.1.-" evidence="1"/>
<dbReference type="EMBL" id="CP000083">
    <property type="protein sequence ID" value="AAZ27181.1"/>
    <property type="molecule type" value="Genomic_DNA"/>
</dbReference>
<dbReference type="RefSeq" id="WP_011045038.1">
    <property type="nucleotide sequence ID" value="NC_003910.7"/>
</dbReference>
<dbReference type="SMR" id="Q47W65"/>
<dbReference type="STRING" id="167879.CPS_4307"/>
<dbReference type="KEGG" id="cps:CPS_4307"/>
<dbReference type="HOGENOM" id="CLU_015768_0_1_6"/>
<dbReference type="Proteomes" id="UP000000547">
    <property type="component" value="Chromosome"/>
</dbReference>
<dbReference type="GO" id="GO:0005829">
    <property type="term" value="C:cytosol"/>
    <property type="evidence" value="ECO:0007669"/>
    <property type="project" value="TreeGrafter"/>
</dbReference>
<dbReference type="GO" id="GO:0005524">
    <property type="term" value="F:ATP binding"/>
    <property type="evidence" value="ECO:0007669"/>
    <property type="project" value="UniProtKB-KW"/>
</dbReference>
<dbReference type="GO" id="GO:0004818">
    <property type="term" value="F:glutamate-tRNA ligase activity"/>
    <property type="evidence" value="ECO:0007669"/>
    <property type="project" value="TreeGrafter"/>
</dbReference>
<dbReference type="GO" id="GO:0008270">
    <property type="term" value="F:zinc ion binding"/>
    <property type="evidence" value="ECO:0007669"/>
    <property type="project" value="UniProtKB-UniRule"/>
</dbReference>
<dbReference type="GO" id="GO:0006424">
    <property type="term" value="P:glutamyl-tRNA aminoacylation"/>
    <property type="evidence" value="ECO:0007669"/>
    <property type="project" value="InterPro"/>
</dbReference>
<dbReference type="GO" id="GO:0006400">
    <property type="term" value="P:tRNA modification"/>
    <property type="evidence" value="ECO:0007669"/>
    <property type="project" value="InterPro"/>
</dbReference>
<dbReference type="FunFam" id="3.40.50.620:FF:000093">
    <property type="entry name" value="Glutamyl-Q tRNA(Asp) synthetase"/>
    <property type="match status" value="1"/>
</dbReference>
<dbReference type="Gene3D" id="3.90.800.10">
    <property type="entry name" value="Glutamyl-tRNA Synthetase, Domain 3"/>
    <property type="match status" value="1"/>
</dbReference>
<dbReference type="Gene3D" id="3.40.50.620">
    <property type="entry name" value="HUPs"/>
    <property type="match status" value="1"/>
</dbReference>
<dbReference type="HAMAP" id="MF_01428">
    <property type="entry name" value="Glu_Q_tRNA_synth"/>
    <property type="match status" value="1"/>
</dbReference>
<dbReference type="InterPro" id="IPR022380">
    <property type="entry name" value="Glu-Q_tRNA(Asp)_Synthase"/>
</dbReference>
<dbReference type="InterPro" id="IPR000924">
    <property type="entry name" value="Glu/Gln-tRNA-synth"/>
</dbReference>
<dbReference type="InterPro" id="IPR020058">
    <property type="entry name" value="Glu/Gln-tRNA-synth_Ib_cat-dom"/>
</dbReference>
<dbReference type="InterPro" id="IPR049940">
    <property type="entry name" value="GluQ/Sye"/>
</dbReference>
<dbReference type="InterPro" id="IPR014729">
    <property type="entry name" value="Rossmann-like_a/b/a_fold"/>
</dbReference>
<dbReference type="NCBIfam" id="NF004314">
    <property type="entry name" value="PRK05710.1-3"/>
    <property type="match status" value="1"/>
</dbReference>
<dbReference type="NCBIfam" id="TIGR03838">
    <property type="entry name" value="queuosine_YadB"/>
    <property type="match status" value="1"/>
</dbReference>
<dbReference type="PANTHER" id="PTHR43311">
    <property type="entry name" value="GLUTAMATE--TRNA LIGASE"/>
    <property type="match status" value="1"/>
</dbReference>
<dbReference type="PANTHER" id="PTHR43311:SF1">
    <property type="entry name" value="GLUTAMYL-Q TRNA(ASP) SYNTHETASE"/>
    <property type="match status" value="1"/>
</dbReference>
<dbReference type="Pfam" id="PF00749">
    <property type="entry name" value="tRNA-synt_1c"/>
    <property type="match status" value="1"/>
</dbReference>
<dbReference type="PRINTS" id="PR00987">
    <property type="entry name" value="TRNASYNTHGLU"/>
</dbReference>
<dbReference type="SUPFAM" id="SSF52374">
    <property type="entry name" value="Nucleotidylyl transferase"/>
    <property type="match status" value="1"/>
</dbReference>
<reference key="1">
    <citation type="journal article" date="2005" name="Proc. Natl. Acad. Sci. U.S.A.">
        <title>The psychrophilic lifestyle as revealed by the genome sequence of Colwellia psychrerythraea 34H through genomic and proteomic analyses.</title>
        <authorList>
            <person name="Methe B.A."/>
            <person name="Nelson K.E."/>
            <person name="Deming J.W."/>
            <person name="Momen B."/>
            <person name="Melamud E."/>
            <person name="Zhang X."/>
            <person name="Moult J."/>
            <person name="Madupu R."/>
            <person name="Nelson W.C."/>
            <person name="Dodson R.J."/>
            <person name="Brinkac L.M."/>
            <person name="Daugherty S.C."/>
            <person name="Durkin A.S."/>
            <person name="DeBoy R.T."/>
            <person name="Kolonay J.F."/>
            <person name="Sullivan S.A."/>
            <person name="Zhou L."/>
            <person name="Davidsen T.M."/>
            <person name="Wu M."/>
            <person name="Huston A.L."/>
            <person name="Lewis M."/>
            <person name="Weaver B."/>
            <person name="Weidman J.F."/>
            <person name="Khouri H."/>
            <person name="Utterback T.R."/>
            <person name="Feldblyum T.V."/>
            <person name="Fraser C.M."/>
        </authorList>
    </citation>
    <scope>NUCLEOTIDE SEQUENCE [LARGE SCALE GENOMIC DNA]</scope>
    <source>
        <strain>34H / ATCC BAA-681</strain>
    </source>
</reference>
<organism>
    <name type="scientific">Colwellia psychrerythraea (strain 34H / ATCC BAA-681)</name>
    <name type="common">Vibrio psychroerythus</name>
    <dbReference type="NCBI Taxonomy" id="167879"/>
    <lineage>
        <taxon>Bacteria</taxon>
        <taxon>Pseudomonadati</taxon>
        <taxon>Pseudomonadota</taxon>
        <taxon>Gammaproteobacteria</taxon>
        <taxon>Alteromonadales</taxon>
        <taxon>Colwelliaceae</taxon>
        <taxon>Colwellia</taxon>
    </lineage>
</organism>
<keyword id="KW-0030">Aminoacyl-tRNA synthetase</keyword>
<keyword id="KW-0067">ATP-binding</keyword>
<keyword id="KW-0436">Ligase</keyword>
<keyword id="KW-0479">Metal-binding</keyword>
<keyword id="KW-0547">Nucleotide-binding</keyword>
<keyword id="KW-0862">Zinc</keyword>
<sequence length="315" mass="35410">MQNLHIKRPLEPKQAFQYRGRFAPSPSGLLHFGSLIAALASFLDAKAFVNDHGEQGKWLIRIEDIDRPREQKGASTAILTTLEAFGLHWDETALYQSTQSQYYRDILSNLAQQKLSYYCQCTRSQIKAIGGIYQGHCRTANYKSQGNATRLVNQYGLHQFNDLFQDHVVCNKALANEDFIIHRKDGLFAYQLAVVADDIAQGITHVVRGCDLLEPTARQLTLFQTLNNSFLKCTTPRYGHIPLAITSEGYKLSKQNKAPAINNANPQPALIAALIFLGQKSIPDLVSASVEEIIQWAITHWQRDLVPKAFEINID</sequence>
<evidence type="ECO:0000255" key="1">
    <source>
        <dbReference type="HAMAP-Rule" id="MF_01428"/>
    </source>
</evidence>
<proteinExistence type="inferred from homology"/>